<proteinExistence type="inferred from homology"/>
<protein>
    <recommendedName>
        <fullName evidence="1">Glutamate racemase</fullName>
        <ecNumber evidence="1">5.1.1.3</ecNumber>
    </recommendedName>
</protein>
<name>MURI_STRPD</name>
<keyword id="KW-0133">Cell shape</keyword>
<keyword id="KW-0961">Cell wall biogenesis/degradation</keyword>
<keyword id="KW-0413">Isomerase</keyword>
<keyword id="KW-0573">Peptidoglycan synthesis</keyword>
<comment type="function">
    <text evidence="1">Provides the (R)-glutamate required for cell wall biosynthesis.</text>
</comment>
<comment type="catalytic activity">
    <reaction evidence="1">
        <text>L-glutamate = D-glutamate</text>
        <dbReference type="Rhea" id="RHEA:12813"/>
        <dbReference type="ChEBI" id="CHEBI:29985"/>
        <dbReference type="ChEBI" id="CHEBI:29986"/>
        <dbReference type="EC" id="5.1.1.3"/>
    </reaction>
</comment>
<comment type="pathway">
    <text evidence="1">Cell wall biogenesis; peptidoglycan biosynthesis.</text>
</comment>
<comment type="similarity">
    <text evidence="1">Belongs to the aspartate/glutamate racemases family.</text>
</comment>
<accession>Q1JIG0</accession>
<reference key="1">
    <citation type="journal article" date="2006" name="Proc. Natl. Acad. Sci. U.S.A.">
        <title>Molecular genetic anatomy of inter- and intraserotype variation in the human bacterial pathogen group A Streptococcus.</title>
        <authorList>
            <person name="Beres S.B."/>
            <person name="Richter E.W."/>
            <person name="Nagiec M.J."/>
            <person name="Sumby P."/>
            <person name="Porcella S.F."/>
            <person name="DeLeo F.R."/>
            <person name="Musser J.M."/>
        </authorList>
    </citation>
    <scope>NUCLEOTIDE SEQUENCE [LARGE SCALE GENOMIC DNA]</scope>
    <source>
        <strain>MGAS10270</strain>
    </source>
</reference>
<sequence>MDTRAIGFLDSGVGGLTVVCELIRQLPHEKIVYIGDSARAPYGPRPKKQIKEYTWELVNFLLTQNVKMIVFACNTATAVAWEEVKAALDIPVLGVILPGASAAIKSTTKGQVGVIGTPMTVASDIYRKKIQLLAPSVQVRSLACPKFVPIVESNEMCSSIAKKIVYDSLSPLVGKIDTLVLGCTHYPLLRPIIQNVMGPSVKLIDSGAECVRDISVLLNYFDINGNYHQKAVEHRFFTTANPEIFQEIASIWLKQKINVEHVTL</sequence>
<dbReference type="EC" id="5.1.1.3" evidence="1"/>
<dbReference type="EMBL" id="CP000260">
    <property type="protein sequence ID" value="ABF33363.1"/>
    <property type="molecule type" value="Genomic_DNA"/>
</dbReference>
<dbReference type="SMR" id="Q1JIG0"/>
<dbReference type="KEGG" id="sph:MGAS10270_Spy0298"/>
<dbReference type="HOGENOM" id="CLU_052344_0_2_9"/>
<dbReference type="UniPathway" id="UPA00219"/>
<dbReference type="Proteomes" id="UP000002436">
    <property type="component" value="Chromosome"/>
</dbReference>
<dbReference type="GO" id="GO:0008881">
    <property type="term" value="F:glutamate racemase activity"/>
    <property type="evidence" value="ECO:0007669"/>
    <property type="project" value="UniProtKB-UniRule"/>
</dbReference>
<dbReference type="GO" id="GO:0071555">
    <property type="term" value="P:cell wall organization"/>
    <property type="evidence" value="ECO:0007669"/>
    <property type="project" value="UniProtKB-KW"/>
</dbReference>
<dbReference type="GO" id="GO:0009252">
    <property type="term" value="P:peptidoglycan biosynthetic process"/>
    <property type="evidence" value="ECO:0007669"/>
    <property type="project" value="UniProtKB-UniRule"/>
</dbReference>
<dbReference type="GO" id="GO:0008360">
    <property type="term" value="P:regulation of cell shape"/>
    <property type="evidence" value="ECO:0007669"/>
    <property type="project" value="UniProtKB-KW"/>
</dbReference>
<dbReference type="FunFam" id="3.40.50.1860:FF:000002">
    <property type="entry name" value="Glutamate racemase"/>
    <property type="match status" value="1"/>
</dbReference>
<dbReference type="Gene3D" id="3.40.50.1860">
    <property type="match status" value="2"/>
</dbReference>
<dbReference type="HAMAP" id="MF_00258">
    <property type="entry name" value="Glu_racemase"/>
    <property type="match status" value="1"/>
</dbReference>
<dbReference type="InterPro" id="IPR015942">
    <property type="entry name" value="Asp/Glu/hydantoin_racemase"/>
</dbReference>
<dbReference type="InterPro" id="IPR001920">
    <property type="entry name" value="Asp/Glu_race"/>
</dbReference>
<dbReference type="InterPro" id="IPR033134">
    <property type="entry name" value="Asp/Glu_racemase_AS_2"/>
</dbReference>
<dbReference type="InterPro" id="IPR004391">
    <property type="entry name" value="Glu_race"/>
</dbReference>
<dbReference type="NCBIfam" id="TIGR00067">
    <property type="entry name" value="glut_race"/>
    <property type="match status" value="1"/>
</dbReference>
<dbReference type="NCBIfam" id="NF002035">
    <property type="entry name" value="PRK00865.1-3"/>
    <property type="match status" value="1"/>
</dbReference>
<dbReference type="PANTHER" id="PTHR21198">
    <property type="entry name" value="GLUTAMATE RACEMASE"/>
    <property type="match status" value="1"/>
</dbReference>
<dbReference type="PANTHER" id="PTHR21198:SF2">
    <property type="entry name" value="GLUTAMATE RACEMASE"/>
    <property type="match status" value="1"/>
</dbReference>
<dbReference type="Pfam" id="PF01177">
    <property type="entry name" value="Asp_Glu_race"/>
    <property type="match status" value="1"/>
</dbReference>
<dbReference type="SUPFAM" id="SSF53681">
    <property type="entry name" value="Aspartate/glutamate racemase"/>
    <property type="match status" value="2"/>
</dbReference>
<dbReference type="PROSITE" id="PS00924">
    <property type="entry name" value="ASP_GLU_RACEMASE_2"/>
    <property type="match status" value="1"/>
</dbReference>
<evidence type="ECO:0000255" key="1">
    <source>
        <dbReference type="HAMAP-Rule" id="MF_00258"/>
    </source>
</evidence>
<feature type="chain" id="PRO_1000047624" description="Glutamate racemase">
    <location>
        <begin position="1"/>
        <end position="264"/>
    </location>
</feature>
<feature type="active site" description="Proton donor/acceptor" evidence="1">
    <location>
        <position position="73"/>
    </location>
</feature>
<feature type="active site" description="Proton donor/acceptor" evidence="1">
    <location>
        <position position="183"/>
    </location>
</feature>
<feature type="binding site" evidence="1">
    <location>
        <begin position="10"/>
        <end position="11"/>
    </location>
    <ligand>
        <name>substrate</name>
    </ligand>
</feature>
<feature type="binding site" evidence="1">
    <location>
        <begin position="42"/>
        <end position="43"/>
    </location>
    <ligand>
        <name>substrate</name>
    </ligand>
</feature>
<feature type="binding site" evidence="1">
    <location>
        <begin position="74"/>
        <end position="75"/>
    </location>
    <ligand>
        <name>substrate</name>
    </ligand>
</feature>
<feature type="binding site" evidence="1">
    <location>
        <begin position="184"/>
        <end position="185"/>
    </location>
    <ligand>
        <name>substrate</name>
    </ligand>
</feature>
<gene>
    <name evidence="1" type="primary">murI</name>
    <name type="ordered locus">MGAS10270_Spy0298</name>
</gene>
<organism>
    <name type="scientific">Streptococcus pyogenes serotype M2 (strain MGAS10270)</name>
    <dbReference type="NCBI Taxonomy" id="370552"/>
    <lineage>
        <taxon>Bacteria</taxon>
        <taxon>Bacillati</taxon>
        <taxon>Bacillota</taxon>
        <taxon>Bacilli</taxon>
        <taxon>Lactobacillales</taxon>
        <taxon>Streptococcaceae</taxon>
        <taxon>Streptococcus</taxon>
    </lineage>
</organism>